<reference key="1">
    <citation type="journal article" date="2003" name="Proc. Natl. Acad. Sci. U.S.A.">
        <title>The genome of Nanoarchaeum equitans: insights into early archaeal evolution and derived parasitism.</title>
        <authorList>
            <person name="Waters E."/>
            <person name="Hohn M.J."/>
            <person name="Ahel I."/>
            <person name="Graham D.E."/>
            <person name="Adams M.D."/>
            <person name="Barnstead M."/>
            <person name="Beeson K.Y."/>
            <person name="Bibbs L."/>
            <person name="Bolanos R."/>
            <person name="Keller M."/>
            <person name="Kretz K."/>
            <person name="Lin X."/>
            <person name="Mathur E."/>
            <person name="Ni J."/>
            <person name="Podar M."/>
            <person name="Richardson T."/>
            <person name="Sutton G.G."/>
            <person name="Simon M."/>
            <person name="Soell D."/>
            <person name="Stetter K.O."/>
            <person name="Short J.M."/>
            <person name="Noorderwier M."/>
        </authorList>
    </citation>
    <scope>NUCLEOTIDE SEQUENCE [LARGE SCALE GENOMIC DNA]</scope>
    <source>
        <strain>Kin4-M</strain>
    </source>
</reference>
<feature type="chain" id="PRO_0000156033" description="dCTP deaminase, dUMP-forming">
    <location>
        <begin position="1"/>
        <end position="198"/>
    </location>
</feature>
<feature type="active site" description="Proton donor/acceptor" evidence="1">
    <location>
        <position position="143"/>
    </location>
</feature>
<feature type="binding site" evidence="1">
    <location>
        <begin position="115"/>
        <end position="120"/>
    </location>
    <ligand>
        <name>dCTP</name>
        <dbReference type="ChEBI" id="CHEBI:61481"/>
    </ligand>
</feature>
<feature type="binding site" evidence="1">
    <location>
        <position position="133"/>
    </location>
    <ligand>
        <name>dCTP</name>
        <dbReference type="ChEBI" id="CHEBI:61481"/>
    </ligand>
</feature>
<feature type="binding site" evidence="1">
    <location>
        <begin position="141"/>
        <end position="143"/>
    </location>
    <ligand>
        <name>dCTP</name>
        <dbReference type="ChEBI" id="CHEBI:61481"/>
    </ligand>
</feature>
<feature type="binding site" evidence="1">
    <location>
        <position position="162"/>
    </location>
    <ligand>
        <name>dCTP</name>
        <dbReference type="ChEBI" id="CHEBI:61481"/>
    </ligand>
</feature>
<feature type="binding site" evidence="1">
    <location>
        <position position="175"/>
    </location>
    <ligand>
        <name>dCTP</name>
        <dbReference type="ChEBI" id="CHEBI:61481"/>
    </ligand>
</feature>
<feature type="binding site" evidence="1">
    <location>
        <position position="184"/>
    </location>
    <ligand>
        <name>dCTP</name>
        <dbReference type="ChEBI" id="CHEBI:61481"/>
    </ligand>
</feature>
<feature type="site" description="Important for bifunctional activity" evidence="1">
    <location>
        <begin position="130"/>
        <end position="131"/>
    </location>
</feature>
<accession>Q74MA7</accession>
<comment type="function">
    <text evidence="1">Bifunctional enzyme that catalyzes both the deamination of dCTP to dUTP and the hydrolysis of dUTP to dUMP without releasing the toxic dUTP intermediate.</text>
</comment>
<comment type="catalytic activity">
    <reaction evidence="1">
        <text>dCTP + 2 H2O = dUMP + NH4(+) + diphosphate</text>
        <dbReference type="Rhea" id="RHEA:19205"/>
        <dbReference type="ChEBI" id="CHEBI:15377"/>
        <dbReference type="ChEBI" id="CHEBI:28938"/>
        <dbReference type="ChEBI" id="CHEBI:33019"/>
        <dbReference type="ChEBI" id="CHEBI:61481"/>
        <dbReference type="ChEBI" id="CHEBI:246422"/>
        <dbReference type="EC" id="3.5.4.30"/>
    </reaction>
</comment>
<comment type="pathway">
    <text evidence="1">Pyrimidine metabolism; dUMP biosynthesis; dUMP from dCTP: step 1/1.</text>
</comment>
<comment type="subunit">
    <text evidence="1">Homotrimer.</text>
</comment>
<comment type="similarity">
    <text evidence="1">Belongs to the dCTP deaminase family.</text>
</comment>
<evidence type="ECO:0000255" key="1">
    <source>
        <dbReference type="HAMAP-Rule" id="MF_00146"/>
    </source>
</evidence>
<keyword id="KW-0378">Hydrolase</keyword>
<keyword id="KW-0546">Nucleotide metabolism</keyword>
<keyword id="KW-0547">Nucleotide-binding</keyword>
<keyword id="KW-1185">Reference proteome</keyword>
<dbReference type="EC" id="3.5.4.30" evidence="1"/>
<dbReference type="EMBL" id="AE017199">
    <property type="protein sequence ID" value="AAR39163.1"/>
    <property type="molecule type" value="Genomic_DNA"/>
</dbReference>
<dbReference type="SMR" id="Q74MA7"/>
<dbReference type="STRING" id="228908.NEQ316"/>
<dbReference type="EnsemblBacteria" id="AAR39163">
    <property type="protein sequence ID" value="AAR39163"/>
    <property type="gene ID" value="NEQ316"/>
</dbReference>
<dbReference type="KEGG" id="neq:NEQ316"/>
<dbReference type="PATRIC" id="fig|228908.8.peg.322"/>
<dbReference type="HOGENOM" id="CLU_087476_2_1_2"/>
<dbReference type="UniPathway" id="UPA00610">
    <property type="reaction ID" value="UER00667"/>
</dbReference>
<dbReference type="Proteomes" id="UP000000578">
    <property type="component" value="Chromosome"/>
</dbReference>
<dbReference type="GO" id="GO:0033973">
    <property type="term" value="F:dCTP deaminase (dUMP-forming) activity"/>
    <property type="evidence" value="ECO:0007669"/>
    <property type="project" value="UniProtKB-UniRule"/>
</dbReference>
<dbReference type="GO" id="GO:0008829">
    <property type="term" value="F:dCTP deaminase activity"/>
    <property type="evidence" value="ECO:0007669"/>
    <property type="project" value="InterPro"/>
</dbReference>
<dbReference type="GO" id="GO:0000166">
    <property type="term" value="F:nucleotide binding"/>
    <property type="evidence" value="ECO:0007669"/>
    <property type="project" value="UniProtKB-KW"/>
</dbReference>
<dbReference type="GO" id="GO:0006226">
    <property type="term" value="P:dUMP biosynthetic process"/>
    <property type="evidence" value="ECO:0007669"/>
    <property type="project" value="UniProtKB-UniRule"/>
</dbReference>
<dbReference type="GO" id="GO:0006229">
    <property type="term" value="P:dUTP biosynthetic process"/>
    <property type="evidence" value="ECO:0007669"/>
    <property type="project" value="InterPro"/>
</dbReference>
<dbReference type="CDD" id="cd07557">
    <property type="entry name" value="trimeric_dUTPase"/>
    <property type="match status" value="1"/>
</dbReference>
<dbReference type="Gene3D" id="2.70.40.10">
    <property type="match status" value="1"/>
</dbReference>
<dbReference type="HAMAP" id="MF_00146">
    <property type="entry name" value="dCTP_deaminase"/>
    <property type="match status" value="1"/>
</dbReference>
<dbReference type="InterPro" id="IPR011962">
    <property type="entry name" value="dCTP_deaminase"/>
</dbReference>
<dbReference type="InterPro" id="IPR036157">
    <property type="entry name" value="dUTPase-like_sf"/>
</dbReference>
<dbReference type="InterPro" id="IPR033704">
    <property type="entry name" value="dUTPase_trimeric"/>
</dbReference>
<dbReference type="NCBIfam" id="TIGR02274">
    <property type="entry name" value="dCTP_deam"/>
    <property type="match status" value="1"/>
</dbReference>
<dbReference type="PANTHER" id="PTHR42680">
    <property type="entry name" value="DCTP DEAMINASE"/>
    <property type="match status" value="1"/>
</dbReference>
<dbReference type="PANTHER" id="PTHR42680:SF3">
    <property type="entry name" value="DCTP DEAMINASE"/>
    <property type="match status" value="1"/>
</dbReference>
<dbReference type="Pfam" id="PF22769">
    <property type="entry name" value="DCD"/>
    <property type="match status" value="1"/>
</dbReference>
<dbReference type="SUPFAM" id="SSF51283">
    <property type="entry name" value="dUTPase-like"/>
    <property type="match status" value="1"/>
</dbReference>
<organism>
    <name type="scientific">Nanoarchaeum equitans (strain Kin4-M)</name>
    <dbReference type="NCBI Taxonomy" id="228908"/>
    <lineage>
        <taxon>Archaea</taxon>
        <taxon>Nanobdellota</taxon>
        <taxon>Candidatus Nanoarchaeia</taxon>
        <taxon>Nanoarchaeales</taxon>
        <taxon>Nanoarchaeaceae</taxon>
        <taxon>Nanoarchaeum</taxon>
    </lineage>
</organism>
<protein>
    <recommendedName>
        <fullName evidence="1">dCTP deaminase, dUMP-forming</fullName>
        <ecNumber evidence="1">3.5.4.30</ecNumber>
    </recommendedName>
    <alternativeName>
        <fullName evidence="1">Bifunctional dCTP deaminase:dUTPase</fullName>
    </alternativeName>
    <alternativeName>
        <fullName evidence="1">DCD-DUT</fullName>
    </alternativeName>
</protein>
<name>DCDB_NANEQ</name>
<proteinExistence type="inferred from homology"/>
<gene>
    <name evidence="1" type="primary">dcd</name>
    <name type="ordered locus">NEQ316</name>
</gene>
<sequence>MLLNDREIKELIDKKEIIIEPFSYEQIQPASIDLRLGNRFRIFRKGEIEVIDPKDFKDELIKIEQDENKIIEKYKYTDVIITENPFIIYPGDFVLASIYEYIKLPRYIAAQLHGKSSIARLGLIIHTSAGWIDPGYEGHLTLEIFNTNNVPIKLYPKMKIAQLQLFRINPVERDYKEKGGKYYKEKGATSSEIWKDFI</sequence>